<evidence type="ECO:0000255" key="1">
    <source>
        <dbReference type="PROSITE-ProRule" id="PRU00238"/>
    </source>
</evidence>
<accession>P11896</accession>
<feature type="chain" id="PRO_0000052735" description="Hemoglobin larval subunit alpha">
    <location>
        <begin position="1"/>
        <end position="142"/>
    </location>
</feature>
<feature type="domain" description="Globin" evidence="1">
    <location>
        <begin position="2"/>
        <end position="142"/>
    </location>
</feature>
<feature type="binding site" evidence="1">
    <location>
        <position position="59"/>
    </location>
    <ligand>
        <name>O2</name>
        <dbReference type="ChEBI" id="CHEBI:15379"/>
    </ligand>
</feature>
<feature type="binding site" description="proximal binding residue" evidence="1">
    <location>
        <position position="88"/>
    </location>
    <ligand>
        <name>heme b</name>
        <dbReference type="ChEBI" id="CHEBI:60344"/>
    </ligand>
    <ligandPart>
        <name>Fe</name>
        <dbReference type="ChEBI" id="CHEBI:18248"/>
    </ligandPart>
</feature>
<proteinExistence type="evidence at transcript level"/>
<protein>
    <recommendedName>
        <fullName>Hemoglobin larval subunit alpha</fullName>
    </recommendedName>
    <alternativeName>
        <fullName>Alpha-globin, larval</fullName>
    </alternativeName>
    <alternativeName>
        <fullName>Hemoglobin alpha-chain, larval</fullName>
    </alternativeName>
</protein>
<organism>
    <name type="scientific">Pleurodeles waltl</name>
    <name type="common">Iberian ribbed newt</name>
    <dbReference type="NCBI Taxonomy" id="8319"/>
    <lineage>
        <taxon>Eukaryota</taxon>
        <taxon>Metazoa</taxon>
        <taxon>Chordata</taxon>
        <taxon>Craniata</taxon>
        <taxon>Vertebrata</taxon>
        <taxon>Euteleostomi</taxon>
        <taxon>Amphibia</taxon>
        <taxon>Batrachia</taxon>
        <taxon>Caudata</taxon>
        <taxon>Salamandroidea</taxon>
        <taxon>Salamandridae</taxon>
        <taxon>Pleurodelinae</taxon>
        <taxon>Pleurodeles</taxon>
    </lineage>
</organism>
<name>HBA3_PLEWA</name>
<reference key="1">
    <citation type="journal article" date="1989" name="Nucleic Acids Res.">
        <title>Nucleotide sequence of a cDNA encoding a larval alpha-globin chain of the amphibian Pleurodeles waltlii.</title>
        <authorList>
            <person name="Flavin M."/>
            <person name="Valentin C."/>
            <person name="Meunier Rotival M."/>
            <person name="Cohen-Solal M."/>
        </authorList>
    </citation>
    <scope>NUCLEOTIDE SEQUENCE [MRNA]</scope>
</reference>
<keyword id="KW-0349">Heme</keyword>
<keyword id="KW-0408">Iron</keyword>
<keyword id="KW-0479">Metal-binding</keyword>
<keyword id="KW-0561">Oxygen transport</keyword>
<keyword id="KW-0813">Transport</keyword>
<sequence length="142" mass="15219">MVLSAEEKALVVGLCGKISGHCDALGGEALDRLFASFGQTRTYFSHFDLSPGSADVKRHGGKVLSAIGEAAKHIDSMDQALSKLSDLHAYNLRVDPGNFQLLSHCIQAVLAAHFPADFTPQCQAAWDKFLAAVSAVLTSKYR</sequence>
<dbReference type="EMBL" id="X14226">
    <property type="protein sequence ID" value="CAA32442.1"/>
    <property type="molecule type" value="mRNA"/>
</dbReference>
<dbReference type="PIR" id="S04071">
    <property type="entry name" value="S04071"/>
</dbReference>
<dbReference type="RefSeq" id="XP_069066487.1">
    <property type="nucleotide sequence ID" value="XM_069210386.1"/>
</dbReference>
<dbReference type="RefSeq" id="XP_069066488.1">
    <property type="nucleotide sequence ID" value="XM_069210387.1"/>
</dbReference>
<dbReference type="RefSeq" id="XP_069066489.1">
    <property type="nucleotide sequence ID" value="XM_069210388.1"/>
</dbReference>
<dbReference type="SMR" id="P11896"/>
<dbReference type="GeneID" id="138261438"/>
<dbReference type="GeneID" id="138261439"/>
<dbReference type="GeneID" id="138261440"/>
<dbReference type="OrthoDB" id="8751793at2759"/>
<dbReference type="GO" id="GO:0072562">
    <property type="term" value="C:blood microparticle"/>
    <property type="evidence" value="ECO:0007669"/>
    <property type="project" value="TreeGrafter"/>
</dbReference>
<dbReference type="GO" id="GO:0031838">
    <property type="term" value="C:haptoglobin-hemoglobin complex"/>
    <property type="evidence" value="ECO:0007669"/>
    <property type="project" value="TreeGrafter"/>
</dbReference>
<dbReference type="GO" id="GO:0005833">
    <property type="term" value="C:hemoglobin complex"/>
    <property type="evidence" value="ECO:0007669"/>
    <property type="project" value="InterPro"/>
</dbReference>
<dbReference type="GO" id="GO:0031720">
    <property type="term" value="F:haptoglobin binding"/>
    <property type="evidence" value="ECO:0007669"/>
    <property type="project" value="TreeGrafter"/>
</dbReference>
<dbReference type="GO" id="GO:0020037">
    <property type="term" value="F:heme binding"/>
    <property type="evidence" value="ECO:0007669"/>
    <property type="project" value="InterPro"/>
</dbReference>
<dbReference type="GO" id="GO:0005506">
    <property type="term" value="F:iron ion binding"/>
    <property type="evidence" value="ECO:0007669"/>
    <property type="project" value="InterPro"/>
</dbReference>
<dbReference type="GO" id="GO:0043177">
    <property type="term" value="F:organic acid binding"/>
    <property type="evidence" value="ECO:0007669"/>
    <property type="project" value="TreeGrafter"/>
</dbReference>
<dbReference type="GO" id="GO:0019825">
    <property type="term" value="F:oxygen binding"/>
    <property type="evidence" value="ECO:0007669"/>
    <property type="project" value="InterPro"/>
</dbReference>
<dbReference type="GO" id="GO:0005344">
    <property type="term" value="F:oxygen carrier activity"/>
    <property type="evidence" value="ECO:0007669"/>
    <property type="project" value="UniProtKB-KW"/>
</dbReference>
<dbReference type="GO" id="GO:0004601">
    <property type="term" value="F:peroxidase activity"/>
    <property type="evidence" value="ECO:0007669"/>
    <property type="project" value="TreeGrafter"/>
</dbReference>
<dbReference type="GO" id="GO:0042744">
    <property type="term" value="P:hydrogen peroxide catabolic process"/>
    <property type="evidence" value="ECO:0007669"/>
    <property type="project" value="TreeGrafter"/>
</dbReference>
<dbReference type="CDD" id="cd08927">
    <property type="entry name" value="Hb-alpha-like"/>
    <property type="match status" value="1"/>
</dbReference>
<dbReference type="FunFam" id="1.10.490.10:FF:000002">
    <property type="entry name" value="Hemoglobin subunit alpha"/>
    <property type="match status" value="1"/>
</dbReference>
<dbReference type="Gene3D" id="1.10.490.10">
    <property type="entry name" value="Globins"/>
    <property type="match status" value="1"/>
</dbReference>
<dbReference type="InterPro" id="IPR000971">
    <property type="entry name" value="Globin"/>
</dbReference>
<dbReference type="InterPro" id="IPR009050">
    <property type="entry name" value="Globin-like_sf"/>
</dbReference>
<dbReference type="InterPro" id="IPR012292">
    <property type="entry name" value="Globin/Proto"/>
</dbReference>
<dbReference type="InterPro" id="IPR002338">
    <property type="entry name" value="Hemoglobin_a-typ"/>
</dbReference>
<dbReference type="InterPro" id="IPR050056">
    <property type="entry name" value="Hemoglobin_oxygen_transport"/>
</dbReference>
<dbReference type="InterPro" id="IPR002339">
    <property type="entry name" value="Hemoglobin_pi"/>
</dbReference>
<dbReference type="PANTHER" id="PTHR11442">
    <property type="entry name" value="HEMOGLOBIN FAMILY MEMBER"/>
    <property type="match status" value="1"/>
</dbReference>
<dbReference type="PANTHER" id="PTHR11442:SF41">
    <property type="entry name" value="HEMOGLOBIN SUBUNIT ZETA"/>
    <property type="match status" value="1"/>
</dbReference>
<dbReference type="Pfam" id="PF00042">
    <property type="entry name" value="Globin"/>
    <property type="match status" value="1"/>
</dbReference>
<dbReference type="PRINTS" id="PR00612">
    <property type="entry name" value="ALPHAHAEM"/>
</dbReference>
<dbReference type="PRINTS" id="PR00815">
    <property type="entry name" value="PIHAEM"/>
</dbReference>
<dbReference type="SUPFAM" id="SSF46458">
    <property type="entry name" value="Globin-like"/>
    <property type="match status" value="1"/>
</dbReference>
<dbReference type="PROSITE" id="PS01033">
    <property type="entry name" value="GLOBIN"/>
    <property type="match status" value="1"/>
</dbReference>
<comment type="function">
    <text>Involved in oxygen transport from the lung to the various peripheral tissues.</text>
</comment>
<comment type="subunit">
    <text>Heterotetramer of two alpha chains and two beta chains.</text>
</comment>
<comment type="tissue specificity">
    <text>Red blood cells.</text>
</comment>
<comment type="similarity">
    <text evidence="1">Belongs to the globin family.</text>
</comment>